<dbReference type="EMBL" id="DQ396875">
    <property type="protein sequence ID" value="ABD48234.1"/>
    <property type="molecule type" value="Genomic_DNA"/>
</dbReference>
<dbReference type="RefSeq" id="YP_635952.1">
    <property type="nucleotide sequence ID" value="NC_008101.1"/>
</dbReference>
<dbReference type="SMR" id="Q1KVX2"/>
<dbReference type="GeneID" id="4099819"/>
<dbReference type="GO" id="GO:0009535">
    <property type="term" value="C:chloroplast thylakoid membrane"/>
    <property type="evidence" value="ECO:0007669"/>
    <property type="project" value="UniProtKB-SubCell"/>
</dbReference>
<dbReference type="GO" id="GO:0009539">
    <property type="term" value="C:photosystem II reaction center"/>
    <property type="evidence" value="ECO:0007669"/>
    <property type="project" value="InterPro"/>
</dbReference>
<dbReference type="GO" id="GO:0015979">
    <property type="term" value="P:photosynthesis"/>
    <property type="evidence" value="ECO:0007669"/>
    <property type="project" value="UniProtKB-UniRule"/>
</dbReference>
<dbReference type="HAMAP" id="MF_01317">
    <property type="entry name" value="PSII_PsbL"/>
    <property type="match status" value="1"/>
</dbReference>
<dbReference type="InterPro" id="IPR003372">
    <property type="entry name" value="PSII_PsbL"/>
</dbReference>
<dbReference type="InterPro" id="IPR037266">
    <property type="entry name" value="PSII_PsbL_sf"/>
</dbReference>
<dbReference type="NCBIfam" id="NF001972">
    <property type="entry name" value="PRK00753.1"/>
    <property type="match status" value="1"/>
</dbReference>
<dbReference type="Pfam" id="PF02419">
    <property type="entry name" value="PsbL"/>
    <property type="match status" value="1"/>
</dbReference>
<dbReference type="SUPFAM" id="SSF161017">
    <property type="entry name" value="Photosystem II reaction center protein L, PsbL"/>
    <property type="match status" value="1"/>
</dbReference>
<comment type="function">
    <text evidence="1">One of the components of the core complex of photosystem II (PSII). PSII is a light-driven water:plastoquinone oxidoreductase that uses light energy to abstract electrons from H(2)O, generating O(2) and a proton gradient subsequently used for ATP formation. It consists of a core antenna complex that captures photons, and an electron transfer chain that converts photonic excitation into a charge separation. This subunit is found at the monomer-monomer interface and is required for correct PSII assembly and/or dimerization.</text>
</comment>
<comment type="subunit">
    <text evidence="1">PSII is composed of 1 copy each of membrane proteins PsbA, PsbB, PsbC, PsbD, PsbE, PsbF, PsbH, PsbI, PsbJ, PsbK, PsbL, PsbM, PsbT, PsbX, PsbY, PsbZ, Psb30/Ycf12, at least 3 peripheral proteins of the oxygen-evolving complex and a large number of cofactors. It forms dimeric complexes.</text>
</comment>
<comment type="subcellular location">
    <subcellularLocation>
        <location evidence="1">Plastid</location>
        <location evidence="1">Chloroplast thylakoid membrane</location>
        <topology evidence="1">Single-pass membrane protein</topology>
    </subcellularLocation>
</comment>
<comment type="similarity">
    <text evidence="1">Belongs to the PsbL family.</text>
</comment>
<proteinExistence type="inferred from homology"/>
<organism>
    <name type="scientific">Tetradesmus obliquus</name>
    <name type="common">Green alga</name>
    <name type="synonym">Acutodesmus obliquus</name>
    <dbReference type="NCBI Taxonomy" id="3088"/>
    <lineage>
        <taxon>Eukaryota</taxon>
        <taxon>Viridiplantae</taxon>
        <taxon>Chlorophyta</taxon>
        <taxon>core chlorophytes</taxon>
        <taxon>Chlorophyceae</taxon>
        <taxon>CS clade</taxon>
        <taxon>Sphaeropleales</taxon>
        <taxon>Scenedesmaceae</taxon>
        <taxon>Tetradesmus</taxon>
    </lineage>
</organism>
<reference key="1">
    <citation type="journal article" date="2006" name="BMC Evol. Biol.">
        <title>The complete chloroplast genome sequence of the chlorophycean green alga Scenedesmus obliquus reveals a compact gene organization and a biased distribution of genes on the two DNA strands.</title>
        <authorList>
            <person name="de Cambiaire J.-C."/>
            <person name="Otis C."/>
            <person name="Lemieux C."/>
            <person name="Turmel M."/>
        </authorList>
    </citation>
    <scope>NUCLEOTIDE SEQUENCE [LARGE SCALE GENOMIC DNA]</scope>
    <source>
        <strain>UTEX 393</strain>
    </source>
</reference>
<geneLocation type="chloroplast"/>
<name>PSBL_TETOB</name>
<keyword id="KW-0150">Chloroplast</keyword>
<keyword id="KW-0472">Membrane</keyword>
<keyword id="KW-0602">Photosynthesis</keyword>
<keyword id="KW-0604">Photosystem II</keyword>
<keyword id="KW-0934">Plastid</keyword>
<keyword id="KW-0674">Reaction center</keyword>
<keyword id="KW-0793">Thylakoid</keyword>
<keyword id="KW-0812">Transmembrane</keyword>
<keyword id="KW-1133">Transmembrane helix</keyword>
<evidence type="ECO:0000255" key="1">
    <source>
        <dbReference type="HAMAP-Rule" id="MF_01317"/>
    </source>
</evidence>
<accession>Q1KVX2</accession>
<feature type="chain" id="PRO_0000276221" description="Photosystem II reaction center protein L">
    <location>
        <begin position="1"/>
        <end position="38"/>
    </location>
</feature>
<feature type="transmembrane region" description="Helical" evidence="1">
    <location>
        <begin position="17"/>
        <end position="37"/>
    </location>
</feature>
<sequence>MARPNPNKQVVELNRTSLYWGLLLIFVLAVLFSSYIFN</sequence>
<gene>
    <name evidence="1" type="primary">psbL</name>
</gene>
<protein>
    <recommendedName>
        <fullName evidence="1">Photosystem II reaction center protein L</fullName>
        <shortName evidence="1">PSII-L</shortName>
    </recommendedName>
</protein>